<dbReference type="EC" id="6.5.1.2" evidence="1"/>
<dbReference type="EMBL" id="CR543861">
    <property type="protein sequence ID" value="CAG67748.1"/>
    <property type="molecule type" value="Genomic_DNA"/>
</dbReference>
<dbReference type="RefSeq" id="WP_004922204.1">
    <property type="nucleotide sequence ID" value="NC_005966.1"/>
</dbReference>
<dbReference type="SMR" id="Q6FDW0"/>
<dbReference type="STRING" id="202950.GCA_001485005_02599"/>
<dbReference type="GeneID" id="45233310"/>
<dbReference type="KEGG" id="aci:ACIAD0848"/>
<dbReference type="eggNOG" id="COG0272">
    <property type="taxonomic scope" value="Bacteria"/>
</dbReference>
<dbReference type="HOGENOM" id="CLU_007764_2_1_6"/>
<dbReference type="OrthoDB" id="9759736at2"/>
<dbReference type="BioCyc" id="ASP62977:ACIAD_RS03910-MONOMER"/>
<dbReference type="Proteomes" id="UP000000430">
    <property type="component" value="Chromosome"/>
</dbReference>
<dbReference type="GO" id="GO:0005829">
    <property type="term" value="C:cytosol"/>
    <property type="evidence" value="ECO:0007669"/>
    <property type="project" value="TreeGrafter"/>
</dbReference>
<dbReference type="GO" id="GO:0003677">
    <property type="term" value="F:DNA binding"/>
    <property type="evidence" value="ECO:0007669"/>
    <property type="project" value="InterPro"/>
</dbReference>
<dbReference type="GO" id="GO:0003911">
    <property type="term" value="F:DNA ligase (NAD+) activity"/>
    <property type="evidence" value="ECO:0007669"/>
    <property type="project" value="UniProtKB-UniRule"/>
</dbReference>
<dbReference type="GO" id="GO:0046872">
    <property type="term" value="F:metal ion binding"/>
    <property type="evidence" value="ECO:0007669"/>
    <property type="project" value="UniProtKB-KW"/>
</dbReference>
<dbReference type="GO" id="GO:0006281">
    <property type="term" value="P:DNA repair"/>
    <property type="evidence" value="ECO:0007669"/>
    <property type="project" value="UniProtKB-KW"/>
</dbReference>
<dbReference type="GO" id="GO:0006260">
    <property type="term" value="P:DNA replication"/>
    <property type="evidence" value="ECO:0007669"/>
    <property type="project" value="UniProtKB-KW"/>
</dbReference>
<dbReference type="CDD" id="cd17748">
    <property type="entry name" value="BRCT_DNA_ligase_like"/>
    <property type="match status" value="1"/>
</dbReference>
<dbReference type="CDD" id="cd00114">
    <property type="entry name" value="LIGANc"/>
    <property type="match status" value="1"/>
</dbReference>
<dbReference type="FunFam" id="1.10.150.20:FF:000006">
    <property type="entry name" value="DNA ligase"/>
    <property type="match status" value="1"/>
</dbReference>
<dbReference type="FunFam" id="1.10.150.20:FF:000007">
    <property type="entry name" value="DNA ligase"/>
    <property type="match status" value="1"/>
</dbReference>
<dbReference type="FunFam" id="1.10.287.610:FF:000002">
    <property type="entry name" value="DNA ligase"/>
    <property type="match status" value="1"/>
</dbReference>
<dbReference type="FunFam" id="2.40.50.140:FF:000012">
    <property type="entry name" value="DNA ligase"/>
    <property type="match status" value="1"/>
</dbReference>
<dbReference type="FunFam" id="3.30.470.30:FF:000001">
    <property type="entry name" value="DNA ligase"/>
    <property type="match status" value="1"/>
</dbReference>
<dbReference type="Gene3D" id="6.20.10.30">
    <property type="match status" value="1"/>
</dbReference>
<dbReference type="Gene3D" id="1.10.150.20">
    <property type="entry name" value="5' to 3' exonuclease, C-terminal subdomain"/>
    <property type="match status" value="2"/>
</dbReference>
<dbReference type="Gene3D" id="3.40.50.10190">
    <property type="entry name" value="BRCT domain"/>
    <property type="match status" value="1"/>
</dbReference>
<dbReference type="Gene3D" id="3.30.470.30">
    <property type="entry name" value="DNA ligase/mRNA capping enzyme"/>
    <property type="match status" value="1"/>
</dbReference>
<dbReference type="Gene3D" id="1.10.287.610">
    <property type="entry name" value="Helix hairpin bin"/>
    <property type="match status" value="1"/>
</dbReference>
<dbReference type="Gene3D" id="2.40.50.140">
    <property type="entry name" value="Nucleic acid-binding proteins"/>
    <property type="match status" value="1"/>
</dbReference>
<dbReference type="HAMAP" id="MF_01588">
    <property type="entry name" value="DNA_ligase_A"/>
    <property type="match status" value="1"/>
</dbReference>
<dbReference type="InterPro" id="IPR001357">
    <property type="entry name" value="BRCT_dom"/>
</dbReference>
<dbReference type="InterPro" id="IPR036420">
    <property type="entry name" value="BRCT_dom_sf"/>
</dbReference>
<dbReference type="InterPro" id="IPR041663">
    <property type="entry name" value="DisA/LigA_HHH"/>
</dbReference>
<dbReference type="InterPro" id="IPR001679">
    <property type="entry name" value="DNA_ligase"/>
</dbReference>
<dbReference type="InterPro" id="IPR018239">
    <property type="entry name" value="DNA_ligase_AS"/>
</dbReference>
<dbReference type="InterPro" id="IPR033136">
    <property type="entry name" value="DNA_ligase_CS"/>
</dbReference>
<dbReference type="InterPro" id="IPR013839">
    <property type="entry name" value="DNAligase_adenylation"/>
</dbReference>
<dbReference type="InterPro" id="IPR013840">
    <property type="entry name" value="DNAligase_N"/>
</dbReference>
<dbReference type="InterPro" id="IPR003583">
    <property type="entry name" value="Hlx-hairpin-Hlx_DNA-bd_motif"/>
</dbReference>
<dbReference type="InterPro" id="IPR012340">
    <property type="entry name" value="NA-bd_OB-fold"/>
</dbReference>
<dbReference type="InterPro" id="IPR004150">
    <property type="entry name" value="NAD_DNA_ligase_OB"/>
</dbReference>
<dbReference type="InterPro" id="IPR010994">
    <property type="entry name" value="RuvA_2-like"/>
</dbReference>
<dbReference type="InterPro" id="IPR004149">
    <property type="entry name" value="Znf_DNAligase_C4"/>
</dbReference>
<dbReference type="NCBIfam" id="TIGR00575">
    <property type="entry name" value="dnlj"/>
    <property type="match status" value="1"/>
</dbReference>
<dbReference type="NCBIfam" id="NF005932">
    <property type="entry name" value="PRK07956.1"/>
    <property type="match status" value="1"/>
</dbReference>
<dbReference type="PANTHER" id="PTHR23389">
    <property type="entry name" value="CHROMOSOME TRANSMISSION FIDELITY FACTOR 18"/>
    <property type="match status" value="1"/>
</dbReference>
<dbReference type="PANTHER" id="PTHR23389:SF9">
    <property type="entry name" value="DNA LIGASE"/>
    <property type="match status" value="1"/>
</dbReference>
<dbReference type="Pfam" id="PF00533">
    <property type="entry name" value="BRCT"/>
    <property type="match status" value="1"/>
</dbReference>
<dbReference type="Pfam" id="PF01653">
    <property type="entry name" value="DNA_ligase_aden"/>
    <property type="match status" value="1"/>
</dbReference>
<dbReference type="Pfam" id="PF03120">
    <property type="entry name" value="DNA_ligase_OB"/>
    <property type="match status" value="1"/>
</dbReference>
<dbReference type="Pfam" id="PF03119">
    <property type="entry name" value="DNA_ligase_ZBD"/>
    <property type="match status" value="1"/>
</dbReference>
<dbReference type="Pfam" id="PF12826">
    <property type="entry name" value="HHH_2"/>
    <property type="match status" value="1"/>
</dbReference>
<dbReference type="Pfam" id="PF22745">
    <property type="entry name" value="Nlig-Ia"/>
    <property type="match status" value="1"/>
</dbReference>
<dbReference type="PIRSF" id="PIRSF001604">
    <property type="entry name" value="LigA"/>
    <property type="match status" value="1"/>
</dbReference>
<dbReference type="SMART" id="SM00292">
    <property type="entry name" value="BRCT"/>
    <property type="match status" value="1"/>
</dbReference>
<dbReference type="SMART" id="SM00278">
    <property type="entry name" value="HhH1"/>
    <property type="match status" value="4"/>
</dbReference>
<dbReference type="SMART" id="SM00532">
    <property type="entry name" value="LIGANc"/>
    <property type="match status" value="1"/>
</dbReference>
<dbReference type="SUPFAM" id="SSF52113">
    <property type="entry name" value="BRCT domain"/>
    <property type="match status" value="1"/>
</dbReference>
<dbReference type="SUPFAM" id="SSF56091">
    <property type="entry name" value="DNA ligase/mRNA capping enzyme, catalytic domain"/>
    <property type="match status" value="1"/>
</dbReference>
<dbReference type="SUPFAM" id="SSF50249">
    <property type="entry name" value="Nucleic acid-binding proteins"/>
    <property type="match status" value="1"/>
</dbReference>
<dbReference type="SUPFAM" id="SSF47781">
    <property type="entry name" value="RuvA domain 2-like"/>
    <property type="match status" value="1"/>
</dbReference>
<dbReference type="PROSITE" id="PS50172">
    <property type="entry name" value="BRCT"/>
    <property type="match status" value="1"/>
</dbReference>
<dbReference type="PROSITE" id="PS01055">
    <property type="entry name" value="DNA_LIGASE_N1"/>
    <property type="match status" value="1"/>
</dbReference>
<dbReference type="PROSITE" id="PS01056">
    <property type="entry name" value="DNA_LIGASE_N2"/>
    <property type="match status" value="1"/>
</dbReference>
<proteinExistence type="inferred from homology"/>
<reference key="1">
    <citation type="journal article" date="2004" name="Nucleic Acids Res.">
        <title>Unique features revealed by the genome sequence of Acinetobacter sp. ADP1, a versatile and naturally transformation competent bacterium.</title>
        <authorList>
            <person name="Barbe V."/>
            <person name="Vallenet D."/>
            <person name="Fonknechten N."/>
            <person name="Kreimeyer A."/>
            <person name="Oztas S."/>
            <person name="Labarre L."/>
            <person name="Cruveiller S."/>
            <person name="Robert C."/>
            <person name="Duprat S."/>
            <person name="Wincker P."/>
            <person name="Ornston L.N."/>
            <person name="Weissenbach J."/>
            <person name="Marliere P."/>
            <person name="Cohen G.N."/>
            <person name="Medigue C."/>
        </authorList>
    </citation>
    <scope>NUCLEOTIDE SEQUENCE [LARGE SCALE GENOMIC DNA]</scope>
    <source>
        <strain>ATCC 33305 / BD413 / ADP1</strain>
    </source>
</reference>
<keyword id="KW-0227">DNA damage</keyword>
<keyword id="KW-0234">DNA repair</keyword>
<keyword id="KW-0235">DNA replication</keyword>
<keyword id="KW-0436">Ligase</keyword>
<keyword id="KW-0460">Magnesium</keyword>
<keyword id="KW-0464">Manganese</keyword>
<keyword id="KW-0479">Metal-binding</keyword>
<keyword id="KW-0520">NAD</keyword>
<keyword id="KW-0862">Zinc</keyword>
<evidence type="ECO:0000255" key="1">
    <source>
        <dbReference type="HAMAP-Rule" id="MF_01588"/>
    </source>
</evidence>
<accession>Q6FDW0</accession>
<sequence length="676" mass="75659">MMQPADIVAQMRQLIQLIAKHNHAYYVMDQPSITDNEYDQLFHQLKALEAEYPELTQADTPTNRVGGQALSKFETVTHAVPMLSLGNVFNQEDLFAFARRIEERLPNQQIQYDVELKLDGLAISLWYENGVLVRGVTRGDGETGEDITQNVKTIRNLPKHLQHHSVETPRFLEVRGEVLMPKQGFERLNAANEAKGEKTFANPRNAAAGSLRQLDPAIAASRPLAFYAYGIAQCEPHHGLGSMHESLQWLTQLGFEIAERQFLCSSIQEVQQCYEQIQQERPDLAVEIDGMVIKVDDLKQQQQLGFLSREPRWATAYKFPAEVAMTTVENIDWQVGRTGTLTPVARLQPVFVGGVTVSNVTLHNIGEIHRLDVRVGDRVSVYRSGDVIPKVEKVWPEFRPELAEIVQLPEQCPVCSSPVVMPEGEALARCSGGLYCAAQRIEAIRHFVSRKALDIEGLGDRWVESLLHLDLLKDVADIYHLHEHREQLLTIEKMGEKSVQNLMDAIEASKKTTLARFIYALGIRGVGETTARMLANTFQTLDALKQADIEALKKTPDVGDITAEWIYDFFLAEHNIEVLDRLLAAGIHWDAPLAPTRQPLNGESWVVTGTLETMGRDEATQRLQALGARVSGSVSSKTKCVVAGEKAGSKLDKAEKLQIRVMNEQEFLAFLAQYSA</sequence>
<feature type="chain" id="PRO_0000313102" description="DNA ligase">
    <location>
        <begin position="1"/>
        <end position="676"/>
    </location>
</feature>
<feature type="domain" description="BRCT" evidence="1">
    <location>
        <begin position="595"/>
        <end position="676"/>
    </location>
</feature>
<feature type="active site" description="N6-AMP-lysine intermediate" evidence="1">
    <location>
        <position position="117"/>
    </location>
</feature>
<feature type="binding site" evidence="1">
    <location>
        <begin position="35"/>
        <end position="39"/>
    </location>
    <ligand>
        <name>NAD(+)</name>
        <dbReference type="ChEBI" id="CHEBI:57540"/>
    </ligand>
</feature>
<feature type="binding site" evidence="1">
    <location>
        <begin position="84"/>
        <end position="85"/>
    </location>
    <ligand>
        <name>NAD(+)</name>
        <dbReference type="ChEBI" id="CHEBI:57540"/>
    </ligand>
</feature>
<feature type="binding site" evidence="1">
    <location>
        <position position="115"/>
    </location>
    <ligand>
        <name>NAD(+)</name>
        <dbReference type="ChEBI" id="CHEBI:57540"/>
    </ligand>
</feature>
<feature type="binding site" evidence="1">
    <location>
        <position position="138"/>
    </location>
    <ligand>
        <name>NAD(+)</name>
        <dbReference type="ChEBI" id="CHEBI:57540"/>
    </ligand>
</feature>
<feature type="binding site" evidence="1">
    <location>
        <position position="177"/>
    </location>
    <ligand>
        <name>NAD(+)</name>
        <dbReference type="ChEBI" id="CHEBI:57540"/>
    </ligand>
</feature>
<feature type="binding site" evidence="1">
    <location>
        <position position="294"/>
    </location>
    <ligand>
        <name>NAD(+)</name>
        <dbReference type="ChEBI" id="CHEBI:57540"/>
    </ligand>
</feature>
<feature type="binding site" evidence="1">
    <location>
        <position position="318"/>
    </location>
    <ligand>
        <name>NAD(+)</name>
        <dbReference type="ChEBI" id="CHEBI:57540"/>
    </ligand>
</feature>
<feature type="binding site" evidence="1">
    <location>
        <position position="412"/>
    </location>
    <ligand>
        <name>Zn(2+)</name>
        <dbReference type="ChEBI" id="CHEBI:29105"/>
    </ligand>
</feature>
<feature type="binding site" evidence="1">
    <location>
        <position position="415"/>
    </location>
    <ligand>
        <name>Zn(2+)</name>
        <dbReference type="ChEBI" id="CHEBI:29105"/>
    </ligand>
</feature>
<feature type="binding site" evidence="1">
    <location>
        <position position="430"/>
    </location>
    <ligand>
        <name>Zn(2+)</name>
        <dbReference type="ChEBI" id="CHEBI:29105"/>
    </ligand>
</feature>
<feature type="binding site" evidence="1">
    <location>
        <position position="436"/>
    </location>
    <ligand>
        <name>Zn(2+)</name>
        <dbReference type="ChEBI" id="CHEBI:29105"/>
    </ligand>
</feature>
<name>DNLJ_ACIAD</name>
<protein>
    <recommendedName>
        <fullName evidence="1">DNA ligase</fullName>
        <ecNumber evidence="1">6.5.1.2</ecNumber>
    </recommendedName>
    <alternativeName>
        <fullName evidence="1">Polydeoxyribonucleotide synthase [NAD(+)]</fullName>
    </alternativeName>
</protein>
<organism>
    <name type="scientific">Acinetobacter baylyi (strain ATCC 33305 / BD413 / ADP1)</name>
    <dbReference type="NCBI Taxonomy" id="62977"/>
    <lineage>
        <taxon>Bacteria</taxon>
        <taxon>Pseudomonadati</taxon>
        <taxon>Pseudomonadota</taxon>
        <taxon>Gammaproteobacteria</taxon>
        <taxon>Moraxellales</taxon>
        <taxon>Moraxellaceae</taxon>
        <taxon>Acinetobacter</taxon>
    </lineage>
</organism>
<comment type="function">
    <text evidence="1">DNA ligase that catalyzes the formation of phosphodiester linkages between 5'-phosphoryl and 3'-hydroxyl groups in double-stranded DNA using NAD as a coenzyme and as the energy source for the reaction. It is essential for DNA replication and repair of damaged DNA.</text>
</comment>
<comment type="catalytic activity">
    <reaction evidence="1">
        <text>NAD(+) + (deoxyribonucleotide)n-3'-hydroxyl + 5'-phospho-(deoxyribonucleotide)m = (deoxyribonucleotide)n+m + AMP + beta-nicotinamide D-nucleotide.</text>
        <dbReference type="EC" id="6.5.1.2"/>
    </reaction>
</comment>
<comment type="cofactor">
    <cofactor evidence="1">
        <name>Mg(2+)</name>
        <dbReference type="ChEBI" id="CHEBI:18420"/>
    </cofactor>
    <cofactor evidence="1">
        <name>Mn(2+)</name>
        <dbReference type="ChEBI" id="CHEBI:29035"/>
    </cofactor>
</comment>
<comment type="similarity">
    <text evidence="1">Belongs to the NAD-dependent DNA ligase family. LigA subfamily.</text>
</comment>
<gene>
    <name evidence="1" type="primary">ligA</name>
    <name type="ordered locus">ACIAD0848</name>
</gene>